<protein>
    <recommendedName>
        <fullName>Serine/threonine-protein kinase SSN3</fullName>
        <ecNumber>2.7.11.22</ecNumber>
        <ecNumber>2.7.11.23</ecNumber>
    </recommendedName>
    <alternativeName>
        <fullName>Cyclin-dependent kinase 8</fullName>
    </alternativeName>
</protein>
<accession>Q6CCB0</accession>
<organism>
    <name type="scientific">Yarrowia lipolytica (strain CLIB 122 / E 150)</name>
    <name type="common">Yeast</name>
    <name type="synonym">Candida lipolytica</name>
    <dbReference type="NCBI Taxonomy" id="284591"/>
    <lineage>
        <taxon>Eukaryota</taxon>
        <taxon>Fungi</taxon>
        <taxon>Dikarya</taxon>
        <taxon>Ascomycota</taxon>
        <taxon>Saccharomycotina</taxon>
        <taxon>Dipodascomycetes</taxon>
        <taxon>Dipodascales</taxon>
        <taxon>Dipodascales incertae sedis</taxon>
        <taxon>Yarrowia</taxon>
    </lineage>
</organism>
<proteinExistence type="inferred from homology"/>
<feature type="chain" id="PRO_0000312952" description="Serine/threonine-protein kinase SSN3">
    <location>
        <begin position="1"/>
        <end position="405"/>
    </location>
</feature>
<feature type="domain" description="Protein kinase" evidence="2">
    <location>
        <begin position="40"/>
        <end position="350"/>
    </location>
</feature>
<feature type="region of interest" description="Disordered" evidence="4">
    <location>
        <begin position="377"/>
        <end position="405"/>
    </location>
</feature>
<feature type="compositionally biased region" description="Polar residues" evidence="4">
    <location>
        <begin position="381"/>
        <end position="391"/>
    </location>
</feature>
<feature type="active site" description="Proton acceptor" evidence="2 3">
    <location>
        <position position="173"/>
    </location>
</feature>
<feature type="binding site" evidence="2">
    <location>
        <begin position="46"/>
        <end position="54"/>
    </location>
    <ligand>
        <name>ATP</name>
        <dbReference type="ChEBI" id="CHEBI:30616"/>
    </ligand>
</feature>
<feature type="binding site" evidence="2">
    <location>
        <position position="71"/>
    </location>
    <ligand>
        <name>ATP</name>
        <dbReference type="ChEBI" id="CHEBI:30616"/>
    </ligand>
</feature>
<dbReference type="EC" id="2.7.11.22"/>
<dbReference type="EC" id="2.7.11.23"/>
<dbReference type="EMBL" id="CR382129">
    <property type="protein sequence ID" value="CAG82011.1"/>
    <property type="molecule type" value="Genomic_DNA"/>
</dbReference>
<dbReference type="RefSeq" id="XP_501702.1">
    <property type="nucleotide sequence ID" value="XM_501702.1"/>
</dbReference>
<dbReference type="SMR" id="Q6CCB0"/>
<dbReference type="FunCoup" id="Q6CCB0">
    <property type="interactions" value="1085"/>
</dbReference>
<dbReference type="STRING" id="284591.Q6CCB0"/>
<dbReference type="EnsemblFungi" id="CAG82011">
    <property type="protein sequence ID" value="CAG82011"/>
    <property type="gene ID" value="YALI0_C10967g"/>
</dbReference>
<dbReference type="KEGG" id="yli:2909134"/>
<dbReference type="VEuPathDB" id="FungiDB:YALI0_C10967g"/>
<dbReference type="HOGENOM" id="CLU_000288_181_6_1"/>
<dbReference type="InParanoid" id="Q6CCB0"/>
<dbReference type="OMA" id="YFKNGGP"/>
<dbReference type="OrthoDB" id="87676at4891"/>
<dbReference type="Proteomes" id="UP000001300">
    <property type="component" value="Chromosome C"/>
</dbReference>
<dbReference type="GO" id="GO:1990508">
    <property type="term" value="C:CKM complex"/>
    <property type="evidence" value="ECO:0007669"/>
    <property type="project" value="EnsemblFungi"/>
</dbReference>
<dbReference type="GO" id="GO:0016592">
    <property type="term" value="C:mediator complex"/>
    <property type="evidence" value="ECO:0000318"/>
    <property type="project" value="GO_Central"/>
</dbReference>
<dbReference type="GO" id="GO:0005634">
    <property type="term" value="C:nucleus"/>
    <property type="evidence" value="ECO:0000318"/>
    <property type="project" value="GO_Central"/>
</dbReference>
<dbReference type="GO" id="GO:0005524">
    <property type="term" value="F:ATP binding"/>
    <property type="evidence" value="ECO:0007669"/>
    <property type="project" value="UniProtKB-KW"/>
</dbReference>
<dbReference type="GO" id="GO:0004693">
    <property type="term" value="F:cyclin-dependent protein serine/threonine kinase activity"/>
    <property type="evidence" value="ECO:0000318"/>
    <property type="project" value="GO_Central"/>
</dbReference>
<dbReference type="GO" id="GO:0046872">
    <property type="term" value="F:metal ion binding"/>
    <property type="evidence" value="ECO:0007669"/>
    <property type="project" value="UniProtKB-KW"/>
</dbReference>
<dbReference type="GO" id="GO:0106310">
    <property type="term" value="F:protein serine kinase activity"/>
    <property type="evidence" value="ECO:0007669"/>
    <property type="project" value="RHEA"/>
</dbReference>
<dbReference type="GO" id="GO:0008353">
    <property type="term" value="F:RNA polymerase II CTD heptapeptide repeat kinase activity"/>
    <property type="evidence" value="ECO:0007669"/>
    <property type="project" value="UniProtKB-EC"/>
</dbReference>
<dbReference type="GO" id="GO:0060258">
    <property type="term" value="P:negative regulation of filamentous growth"/>
    <property type="evidence" value="ECO:0007669"/>
    <property type="project" value="EnsemblFungi"/>
</dbReference>
<dbReference type="GO" id="GO:0000122">
    <property type="term" value="P:negative regulation of transcription by RNA polymerase II"/>
    <property type="evidence" value="ECO:0007669"/>
    <property type="project" value="EnsemblFungi"/>
</dbReference>
<dbReference type="GO" id="GO:0070481">
    <property type="term" value="P:nuclear-transcribed mRNA catabolic process, non-stop decay"/>
    <property type="evidence" value="ECO:0007669"/>
    <property type="project" value="EnsemblFungi"/>
</dbReference>
<dbReference type="GO" id="GO:0045944">
    <property type="term" value="P:positive regulation of transcription by RNA polymerase II"/>
    <property type="evidence" value="ECO:0007669"/>
    <property type="project" value="EnsemblFungi"/>
</dbReference>
<dbReference type="GO" id="GO:0031648">
    <property type="term" value="P:protein destabilization"/>
    <property type="evidence" value="ECO:0007669"/>
    <property type="project" value="EnsemblFungi"/>
</dbReference>
<dbReference type="CDD" id="cd07842">
    <property type="entry name" value="STKc_CDK8_like"/>
    <property type="match status" value="1"/>
</dbReference>
<dbReference type="FunFam" id="1.10.510.10:FF:000408">
    <property type="entry name" value="Serine/threonine-protein kinase SSN3"/>
    <property type="match status" value="1"/>
</dbReference>
<dbReference type="FunFam" id="3.30.200.20:FF:000426">
    <property type="entry name" value="Serine/threonine-protein kinase ssn3"/>
    <property type="match status" value="1"/>
</dbReference>
<dbReference type="Gene3D" id="3.30.200.20">
    <property type="entry name" value="Phosphorylase Kinase, domain 1"/>
    <property type="match status" value="1"/>
</dbReference>
<dbReference type="Gene3D" id="1.10.510.10">
    <property type="entry name" value="Transferase(Phosphotransferase) domain 1"/>
    <property type="match status" value="1"/>
</dbReference>
<dbReference type="InterPro" id="IPR050108">
    <property type="entry name" value="CDK"/>
</dbReference>
<dbReference type="InterPro" id="IPR011009">
    <property type="entry name" value="Kinase-like_dom_sf"/>
</dbReference>
<dbReference type="InterPro" id="IPR000719">
    <property type="entry name" value="Prot_kinase_dom"/>
</dbReference>
<dbReference type="InterPro" id="IPR008271">
    <property type="entry name" value="Ser/Thr_kinase_AS"/>
</dbReference>
<dbReference type="PANTHER" id="PTHR24056">
    <property type="entry name" value="CELL DIVISION PROTEIN KINASE"/>
    <property type="match status" value="1"/>
</dbReference>
<dbReference type="PANTHER" id="PTHR24056:SF495">
    <property type="entry name" value="CYCLIN-DEPENDENT KINASE 8-RELATED"/>
    <property type="match status" value="1"/>
</dbReference>
<dbReference type="Pfam" id="PF00069">
    <property type="entry name" value="Pkinase"/>
    <property type="match status" value="1"/>
</dbReference>
<dbReference type="SMART" id="SM00220">
    <property type="entry name" value="S_TKc"/>
    <property type="match status" value="1"/>
</dbReference>
<dbReference type="SUPFAM" id="SSF56112">
    <property type="entry name" value="Protein kinase-like (PK-like)"/>
    <property type="match status" value="1"/>
</dbReference>
<dbReference type="PROSITE" id="PS50011">
    <property type="entry name" value="PROTEIN_KINASE_DOM"/>
    <property type="match status" value="1"/>
</dbReference>
<dbReference type="PROSITE" id="PS00108">
    <property type="entry name" value="PROTEIN_KINASE_ST"/>
    <property type="match status" value="1"/>
</dbReference>
<name>SSN3_YARLI</name>
<keyword id="KW-0010">Activator</keyword>
<keyword id="KW-0067">ATP-binding</keyword>
<keyword id="KW-0418">Kinase</keyword>
<keyword id="KW-0460">Magnesium</keyword>
<keyword id="KW-0479">Metal-binding</keyword>
<keyword id="KW-0547">Nucleotide-binding</keyword>
<keyword id="KW-0539">Nucleus</keyword>
<keyword id="KW-1185">Reference proteome</keyword>
<keyword id="KW-0678">Repressor</keyword>
<keyword id="KW-0723">Serine/threonine-protein kinase</keyword>
<keyword id="KW-0804">Transcription</keyword>
<keyword id="KW-0805">Transcription regulation</keyword>
<keyword id="KW-0808">Transferase</keyword>
<sequence length="405" mass="46290">MSNYRRGVGSYSRMLGGGTNPFAAYTARKAKTKKRVLDKYEIIGYIAAGTYGRVYKARSKDPGDTNQYAIKKFKADKEGEMVHYAGISQSACREVALCAELDNRNITKLVETILEDTCIYMVFEYAEHDLLQIIHYHSHPERKPIPEYTLKSILWQLLNGVSYLHQNWVLHRDLKPANTMVTSDGVLKIGDLGLARLFSNPLQSLYSGDKVVVTIWYRAPELLLGARHYSPAVDLWAVGCIFAELLALRPIFKGEEAKMDNKTNVPFQRNQMQKIIEILGSPQEDDWPSLSKFPEYESLKQMKTFPPNLEAWYQSIGGTNQKGFQLLSRLLEYDPAKRLTANDALLHPYFTEAPKVSQNVFERQEYKYPPRRISCEDSDIKTMTYQGTKRGSQGGDNLHPRKKQK</sequence>
<reference key="1">
    <citation type="journal article" date="2004" name="Nature">
        <title>Genome evolution in yeasts.</title>
        <authorList>
            <person name="Dujon B."/>
            <person name="Sherman D."/>
            <person name="Fischer G."/>
            <person name="Durrens P."/>
            <person name="Casaregola S."/>
            <person name="Lafontaine I."/>
            <person name="de Montigny J."/>
            <person name="Marck C."/>
            <person name="Neuveglise C."/>
            <person name="Talla E."/>
            <person name="Goffard N."/>
            <person name="Frangeul L."/>
            <person name="Aigle M."/>
            <person name="Anthouard V."/>
            <person name="Babour A."/>
            <person name="Barbe V."/>
            <person name="Barnay S."/>
            <person name="Blanchin S."/>
            <person name="Beckerich J.-M."/>
            <person name="Beyne E."/>
            <person name="Bleykasten C."/>
            <person name="Boisrame A."/>
            <person name="Boyer J."/>
            <person name="Cattolico L."/>
            <person name="Confanioleri F."/>
            <person name="de Daruvar A."/>
            <person name="Despons L."/>
            <person name="Fabre E."/>
            <person name="Fairhead C."/>
            <person name="Ferry-Dumazet H."/>
            <person name="Groppi A."/>
            <person name="Hantraye F."/>
            <person name="Hennequin C."/>
            <person name="Jauniaux N."/>
            <person name="Joyet P."/>
            <person name="Kachouri R."/>
            <person name="Kerrest A."/>
            <person name="Koszul R."/>
            <person name="Lemaire M."/>
            <person name="Lesur I."/>
            <person name="Ma L."/>
            <person name="Muller H."/>
            <person name="Nicaud J.-M."/>
            <person name="Nikolski M."/>
            <person name="Oztas S."/>
            <person name="Ozier-Kalogeropoulos O."/>
            <person name="Pellenz S."/>
            <person name="Potier S."/>
            <person name="Richard G.-F."/>
            <person name="Straub M.-L."/>
            <person name="Suleau A."/>
            <person name="Swennen D."/>
            <person name="Tekaia F."/>
            <person name="Wesolowski-Louvel M."/>
            <person name="Westhof E."/>
            <person name="Wirth B."/>
            <person name="Zeniou-Meyer M."/>
            <person name="Zivanovic Y."/>
            <person name="Bolotin-Fukuhara M."/>
            <person name="Thierry A."/>
            <person name="Bouchier C."/>
            <person name="Caudron B."/>
            <person name="Scarpelli C."/>
            <person name="Gaillardin C."/>
            <person name="Weissenbach J."/>
            <person name="Wincker P."/>
            <person name="Souciet J.-L."/>
        </authorList>
    </citation>
    <scope>NUCLEOTIDE SEQUENCE [LARGE SCALE GENOMIC DNA]</scope>
    <source>
        <strain>CLIB 122 / E 150</strain>
    </source>
</reference>
<evidence type="ECO:0000250" key="1"/>
<evidence type="ECO:0000255" key="2">
    <source>
        <dbReference type="PROSITE-ProRule" id="PRU00159"/>
    </source>
</evidence>
<evidence type="ECO:0000255" key="3">
    <source>
        <dbReference type="PROSITE-ProRule" id="PRU10027"/>
    </source>
</evidence>
<evidence type="ECO:0000256" key="4">
    <source>
        <dbReference type="SAM" id="MobiDB-lite"/>
    </source>
</evidence>
<evidence type="ECO:0000305" key="5"/>
<gene>
    <name type="primary">SSN3</name>
    <name type="synonym">CDK8</name>
    <name type="ordered locus">YALI0C10967g</name>
</gene>
<comment type="function">
    <text evidence="1">Component of the srb8-11 complex. The srb8-11 complex is a regulatory module of the Mediator complex which is itself dependent transcription. The srb8-11 complex may be involved in the transcriptional repression of a subset of genes regulated by Mediator. It may inhibit the association of the Mediator complex with RNA polymerase II to form the holoenzyme complex. The srb8-11 complex phosphorylates the C-terminal domain (CTD) of the largest subunit of RNA polymerase II (By similarity).</text>
</comment>
<comment type="catalytic activity">
    <reaction>
        <text>L-seryl-[protein] + ATP = O-phospho-L-seryl-[protein] + ADP + H(+)</text>
        <dbReference type="Rhea" id="RHEA:17989"/>
        <dbReference type="Rhea" id="RHEA-COMP:9863"/>
        <dbReference type="Rhea" id="RHEA-COMP:11604"/>
        <dbReference type="ChEBI" id="CHEBI:15378"/>
        <dbReference type="ChEBI" id="CHEBI:29999"/>
        <dbReference type="ChEBI" id="CHEBI:30616"/>
        <dbReference type="ChEBI" id="CHEBI:83421"/>
        <dbReference type="ChEBI" id="CHEBI:456216"/>
        <dbReference type="EC" id="2.7.11.22"/>
    </reaction>
</comment>
<comment type="catalytic activity">
    <reaction>
        <text>L-threonyl-[protein] + ATP = O-phospho-L-threonyl-[protein] + ADP + H(+)</text>
        <dbReference type="Rhea" id="RHEA:46608"/>
        <dbReference type="Rhea" id="RHEA-COMP:11060"/>
        <dbReference type="Rhea" id="RHEA-COMP:11605"/>
        <dbReference type="ChEBI" id="CHEBI:15378"/>
        <dbReference type="ChEBI" id="CHEBI:30013"/>
        <dbReference type="ChEBI" id="CHEBI:30616"/>
        <dbReference type="ChEBI" id="CHEBI:61977"/>
        <dbReference type="ChEBI" id="CHEBI:456216"/>
        <dbReference type="EC" id="2.7.11.22"/>
    </reaction>
</comment>
<comment type="catalytic activity">
    <reaction>
        <text>[DNA-directed RNA polymerase] + ATP = phospho-[DNA-directed RNA polymerase] + ADP + H(+)</text>
        <dbReference type="Rhea" id="RHEA:10216"/>
        <dbReference type="Rhea" id="RHEA-COMP:11321"/>
        <dbReference type="Rhea" id="RHEA-COMP:11322"/>
        <dbReference type="ChEBI" id="CHEBI:15378"/>
        <dbReference type="ChEBI" id="CHEBI:30616"/>
        <dbReference type="ChEBI" id="CHEBI:43176"/>
        <dbReference type="ChEBI" id="CHEBI:68546"/>
        <dbReference type="ChEBI" id="CHEBI:456216"/>
        <dbReference type="EC" id="2.7.11.23"/>
    </reaction>
</comment>
<comment type="cofactor">
    <cofactor evidence="1">
        <name>Mg(2+)</name>
        <dbReference type="ChEBI" id="CHEBI:18420"/>
    </cofactor>
</comment>
<comment type="subunit">
    <text evidence="1">Component of the srb8-11 complex, a regulatory module of the Mediator complex.</text>
</comment>
<comment type="subcellular location">
    <subcellularLocation>
        <location evidence="5">Nucleus</location>
    </subcellularLocation>
</comment>
<comment type="similarity">
    <text evidence="5">Belongs to the protein kinase superfamily. CMGC Ser/Thr protein kinase family. CDC2/CDKX subfamily.</text>
</comment>